<protein>
    <recommendedName>
        <fullName evidence="2">Photosystem I iron-sulfur center</fullName>
        <ecNumber evidence="2">1.97.1.12</ecNumber>
    </recommendedName>
    <alternativeName>
        <fullName evidence="2">9 kDa polypeptide</fullName>
    </alternativeName>
    <alternativeName>
        <fullName evidence="2">PSI-C</fullName>
    </alternativeName>
    <alternativeName>
        <fullName evidence="2">Photosystem I subunit VII</fullName>
    </alternativeName>
    <alternativeName>
        <fullName evidence="2">PsaC</fullName>
    </alternativeName>
</protein>
<gene>
    <name evidence="2" type="primary">psaC</name>
</gene>
<proteinExistence type="inferred from homology"/>
<organism>
    <name type="scientific">Nostoc sp. (strain PCC 9229)</name>
    <dbReference type="NCBI Taxonomy" id="70817"/>
    <lineage>
        <taxon>Bacteria</taxon>
        <taxon>Bacillati</taxon>
        <taxon>Cyanobacteriota</taxon>
        <taxon>Cyanophyceae</taxon>
        <taxon>Nostocales</taxon>
        <taxon>Nostocaceae</taxon>
        <taxon>Nostoc</taxon>
    </lineage>
</organism>
<accession>P0A414</accession>
<accession>P23810</accession>
<sequence>MSHTVKIYDTCIGCTQCVRACPTDVLEMVPWDGCKAAQIASSPRTEDCVGCKRCETACPTDFLSIRVYLGAETTRSMGLAY</sequence>
<name>PSAC_NOSS9</name>
<feature type="initiator methionine" description="Removed" evidence="1">
    <location>
        <position position="1"/>
    </location>
</feature>
<feature type="chain" id="PRO_0000062014" description="Photosystem I iron-sulfur center">
    <location>
        <begin position="2"/>
        <end position="81"/>
    </location>
</feature>
<feature type="domain" description="4Fe-4S ferredoxin-type 1" evidence="2">
    <location>
        <begin position="2"/>
        <end position="31"/>
    </location>
</feature>
<feature type="domain" description="4Fe-4S ferredoxin-type 2" evidence="2">
    <location>
        <begin position="39"/>
        <end position="68"/>
    </location>
</feature>
<feature type="binding site" evidence="2">
    <location>
        <position position="11"/>
    </location>
    <ligand>
        <name>[4Fe-4S] cluster</name>
        <dbReference type="ChEBI" id="CHEBI:49883"/>
        <label>1</label>
    </ligand>
</feature>
<feature type="binding site" evidence="2">
    <location>
        <position position="14"/>
    </location>
    <ligand>
        <name>[4Fe-4S] cluster</name>
        <dbReference type="ChEBI" id="CHEBI:49883"/>
        <label>1</label>
    </ligand>
</feature>
<feature type="binding site" evidence="2">
    <location>
        <position position="17"/>
    </location>
    <ligand>
        <name>[4Fe-4S] cluster</name>
        <dbReference type="ChEBI" id="CHEBI:49883"/>
        <label>1</label>
    </ligand>
</feature>
<feature type="binding site" evidence="2">
    <location>
        <position position="21"/>
    </location>
    <ligand>
        <name>[4Fe-4S] cluster</name>
        <dbReference type="ChEBI" id="CHEBI:49883"/>
        <label>2</label>
    </ligand>
</feature>
<feature type="binding site" evidence="2">
    <location>
        <position position="48"/>
    </location>
    <ligand>
        <name>[4Fe-4S] cluster</name>
        <dbReference type="ChEBI" id="CHEBI:49883"/>
        <label>2</label>
    </ligand>
</feature>
<feature type="binding site" evidence="2">
    <location>
        <position position="51"/>
    </location>
    <ligand>
        <name>[4Fe-4S] cluster</name>
        <dbReference type="ChEBI" id="CHEBI:49883"/>
        <label>2</label>
    </ligand>
</feature>
<feature type="binding site" evidence="2">
    <location>
        <position position="54"/>
    </location>
    <ligand>
        <name>[4Fe-4S] cluster</name>
        <dbReference type="ChEBI" id="CHEBI:49883"/>
        <label>2</label>
    </ligand>
</feature>
<feature type="binding site" evidence="2">
    <location>
        <position position="58"/>
    </location>
    <ligand>
        <name>[4Fe-4S] cluster</name>
        <dbReference type="ChEBI" id="CHEBI:49883"/>
        <label>1</label>
    </ligand>
</feature>
<comment type="function">
    <text evidence="2">Apoprotein for the two 4Fe-4S centers FA and FB of photosystem I (PSI); essential for photochemical activity. FB is the terminal electron acceptor of PSI, donating electrons to ferredoxin. The C-terminus interacts with PsaA/B/D and helps assemble the protein into the PSI complex. Required for binding of PsaD and PsaE to PSI. PSI is a plastocyanin/cytochrome c6-ferredoxin oxidoreductase, converting photonic excitation into a charge separation, which transfers an electron from the donor P700 chlorophyll pair to the spectroscopically characterized acceptors A0, A1, FX, FA and FB in turn.</text>
</comment>
<comment type="catalytic activity">
    <reaction evidence="2">
        <text>reduced [plastocyanin] + hnu + oxidized [2Fe-2S]-[ferredoxin] = oxidized [plastocyanin] + reduced [2Fe-2S]-[ferredoxin]</text>
        <dbReference type="Rhea" id="RHEA:30407"/>
        <dbReference type="Rhea" id="RHEA-COMP:10000"/>
        <dbReference type="Rhea" id="RHEA-COMP:10001"/>
        <dbReference type="Rhea" id="RHEA-COMP:10039"/>
        <dbReference type="Rhea" id="RHEA-COMP:10040"/>
        <dbReference type="ChEBI" id="CHEBI:29036"/>
        <dbReference type="ChEBI" id="CHEBI:30212"/>
        <dbReference type="ChEBI" id="CHEBI:33737"/>
        <dbReference type="ChEBI" id="CHEBI:33738"/>
        <dbReference type="ChEBI" id="CHEBI:49552"/>
        <dbReference type="EC" id="1.97.1.12"/>
    </reaction>
</comment>
<comment type="cofactor">
    <cofactor evidence="2">
        <name>[4Fe-4S] cluster</name>
        <dbReference type="ChEBI" id="CHEBI:49883"/>
    </cofactor>
    <text evidence="2">Binds 2 [4Fe-4S] clusters. Cluster 2 is most probably the spectroscopically characterized electron acceptor FA and cluster 1 is most probably FB.</text>
</comment>
<comment type="subunit">
    <text evidence="2">The cyanobacterial PSI reaction center is composed of one copy each of PsaA,B,C,D,E,F,I,J,K,L,M and X, and forms trimeric complexes.</text>
</comment>
<comment type="subcellular location">
    <subcellularLocation>
        <location evidence="2">Cellular thylakoid membrane</location>
        <topology evidence="2">Peripheral membrane protein</topology>
        <orientation evidence="2">Cytoplasmic side</orientation>
    </subcellularLocation>
</comment>
<dbReference type="EC" id="1.97.1.12" evidence="2"/>
<dbReference type="EMBL" id="AF028734">
    <property type="protein sequence ID" value="AAC17972.1"/>
    <property type="molecule type" value="Genomic_DNA"/>
</dbReference>
<dbReference type="SMR" id="P0A414"/>
<dbReference type="GO" id="GO:0009522">
    <property type="term" value="C:photosystem I"/>
    <property type="evidence" value="ECO:0007669"/>
    <property type="project" value="UniProtKB-KW"/>
</dbReference>
<dbReference type="GO" id="GO:0031676">
    <property type="term" value="C:plasma membrane-derived thylakoid membrane"/>
    <property type="evidence" value="ECO:0007669"/>
    <property type="project" value="UniProtKB-SubCell"/>
</dbReference>
<dbReference type="GO" id="GO:0051539">
    <property type="term" value="F:4 iron, 4 sulfur cluster binding"/>
    <property type="evidence" value="ECO:0007669"/>
    <property type="project" value="UniProtKB-KW"/>
</dbReference>
<dbReference type="GO" id="GO:0009055">
    <property type="term" value="F:electron transfer activity"/>
    <property type="evidence" value="ECO:0007669"/>
    <property type="project" value="UniProtKB-UniRule"/>
</dbReference>
<dbReference type="GO" id="GO:0046872">
    <property type="term" value="F:metal ion binding"/>
    <property type="evidence" value="ECO:0007669"/>
    <property type="project" value="UniProtKB-KW"/>
</dbReference>
<dbReference type="GO" id="GO:0016491">
    <property type="term" value="F:oxidoreductase activity"/>
    <property type="evidence" value="ECO:0007669"/>
    <property type="project" value="UniProtKB-KW"/>
</dbReference>
<dbReference type="GO" id="GO:0009773">
    <property type="term" value="P:photosynthetic electron transport in photosystem I"/>
    <property type="evidence" value="ECO:0007669"/>
    <property type="project" value="InterPro"/>
</dbReference>
<dbReference type="FunFam" id="3.30.70.20:FF:000001">
    <property type="entry name" value="Photosystem I iron-sulfur center"/>
    <property type="match status" value="1"/>
</dbReference>
<dbReference type="Gene3D" id="3.30.70.20">
    <property type="match status" value="1"/>
</dbReference>
<dbReference type="HAMAP" id="MF_01303">
    <property type="entry name" value="PSI_PsaC"/>
    <property type="match status" value="1"/>
</dbReference>
<dbReference type="InterPro" id="IPR017896">
    <property type="entry name" value="4Fe4S_Fe-S-bd"/>
</dbReference>
<dbReference type="InterPro" id="IPR017900">
    <property type="entry name" value="4Fe4S_Fe_S_CS"/>
</dbReference>
<dbReference type="InterPro" id="IPR050157">
    <property type="entry name" value="PSI_iron-sulfur_center"/>
</dbReference>
<dbReference type="InterPro" id="IPR017491">
    <property type="entry name" value="PSI_PsaC"/>
</dbReference>
<dbReference type="NCBIfam" id="TIGR03048">
    <property type="entry name" value="PS_I_psaC"/>
    <property type="match status" value="1"/>
</dbReference>
<dbReference type="PANTHER" id="PTHR24960:SF79">
    <property type="entry name" value="PHOTOSYSTEM I IRON-SULFUR CENTER"/>
    <property type="match status" value="1"/>
</dbReference>
<dbReference type="PANTHER" id="PTHR24960">
    <property type="entry name" value="PHOTOSYSTEM I IRON-SULFUR CENTER-RELATED"/>
    <property type="match status" value="1"/>
</dbReference>
<dbReference type="Pfam" id="PF12838">
    <property type="entry name" value="Fer4_7"/>
    <property type="match status" value="1"/>
</dbReference>
<dbReference type="SUPFAM" id="SSF54862">
    <property type="entry name" value="4Fe-4S ferredoxins"/>
    <property type="match status" value="1"/>
</dbReference>
<dbReference type="PROSITE" id="PS00198">
    <property type="entry name" value="4FE4S_FER_1"/>
    <property type="match status" value="2"/>
</dbReference>
<dbReference type="PROSITE" id="PS51379">
    <property type="entry name" value="4FE4S_FER_2"/>
    <property type="match status" value="2"/>
</dbReference>
<keyword id="KW-0004">4Fe-4S</keyword>
<keyword id="KW-0249">Electron transport</keyword>
<keyword id="KW-0408">Iron</keyword>
<keyword id="KW-0411">Iron-sulfur</keyword>
<keyword id="KW-0472">Membrane</keyword>
<keyword id="KW-0479">Metal-binding</keyword>
<keyword id="KW-0560">Oxidoreductase</keyword>
<keyword id="KW-0602">Photosynthesis</keyword>
<keyword id="KW-0603">Photosystem I</keyword>
<keyword id="KW-0677">Repeat</keyword>
<keyword id="KW-0793">Thylakoid</keyword>
<keyword id="KW-0813">Transport</keyword>
<reference key="1">
    <citation type="submission" date="1997-10" db="EMBL/GenBank/DDBJ databases">
        <title>Characterization of a nodM homologous gene in the symbiotic cyanobacterium Nostoc PCC 9229.</title>
        <authorList>
            <person name="Viterbo A."/>
            <person name="Matveyev A."/>
            <person name="Rasmussen U."/>
            <person name="Bergman B."/>
        </authorList>
    </citation>
    <scope>NUCLEOTIDE SEQUENCE [GENOMIC DNA]</scope>
</reference>
<evidence type="ECO:0000250" key="1"/>
<evidence type="ECO:0000255" key="2">
    <source>
        <dbReference type="HAMAP-Rule" id="MF_01303"/>
    </source>
</evidence>